<keyword id="KW-0010">Activator</keyword>
<keyword id="KW-0963">Cytoplasm</keyword>
<keyword id="KW-1185">Reference proteome</keyword>
<keyword id="KW-0678">Repressor</keyword>
<keyword id="KW-0694">RNA-binding</keyword>
<keyword id="KW-0810">Translation regulation</keyword>
<reference key="1">
    <citation type="submission" date="1999-06" db="EMBL/GenBank/DDBJ databases">
        <title>Molecular cloning and characterization of the Salmonella typhimurium csrA gene.</title>
        <authorList>
            <person name="White D.L."/>
            <person name="Romeo T."/>
        </authorList>
    </citation>
    <scope>NUCLEOTIDE SEQUENCE [GENOMIC DNA]</scope>
    <source>
        <strain>SR-11</strain>
    </source>
</reference>
<reference key="2">
    <citation type="journal article" date="2000" name="Infect. Immun.">
        <title>Regulation of Salmonella enterica serovar typhimurium invasion genes by csrA.</title>
        <authorList>
            <person name="Altier C."/>
            <person name="Suyemoto M."/>
            <person name="Lawhon S.D."/>
        </authorList>
    </citation>
    <scope>NUCLEOTIDE SEQUENCE [GENOMIC DNA]</scope>
    <source>
        <strain>ATCC 14028s / SGSG 2262</strain>
    </source>
</reference>
<reference key="3">
    <citation type="journal article" date="2001" name="Nature">
        <title>Complete genome sequence of Salmonella enterica serovar Typhimurium LT2.</title>
        <authorList>
            <person name="McClelland M."/>
            <person name="Sanderson K.E."/>
            <person name="Spieth J."/>
            <person name="Clifton S.W."/>
            <person name="Latreille P."/>
            <person name="Courtney L."/>
            <person name="Porwollik S."/>
            <person name="Ali J."/>
            <person name="Dante M."/>
            <person name="Du F."/>
            <person name="Hou S."/>
            <person name="Layman D."/>
            <person name="Leonard S."/>
            <person name="Nguyen C."/>
            <person name="Scott K."/>
            <person name="Holmes A."/>
            <person name="Grewal N."/>
            <person name="Mulvaney E."/>
            <person name="Ryan E."/>
            <person name="Sun H."/>
            <person name="Florea L."/>
            <person name="Miller W."/>
            <person name="Stoneking T."/>
            <person name="Nhan M."/>
            <person name="Waterston R."/>
            <person name="Wilson R.K."/>
        </authorList>
    </citation>
    <scope>NUCLEOTIDE SEQUENCE [LARGE SCALE GENOMIC DNA]</scope>
    <source>
        <strain>LT2 / SGSC1412 / ATCC 700720</strain>
    </source>
</reference>
<reference key="4">
    <citation type="journal article" date="2009" name="PLoS Pathog.">
        <title>Coordinated regulation of virulence during systemic infection of Salmonella enterica serovar Typhimurium.</title>
        <authorList>
            <person name="Yoon H."/>
            <person name="McDermott J.E."/>
            <person name="Porwollik S."/>
            <person name="McClelland M."/>
            <person name="Heffron F."/>
        </authorList>
    </citation>
    <scope>DISRUPTION PHENOTYPE</scope>
    <source>
        <strain evidence="3">14028s / SGSC 2262</strain>
    </source>
</reference>
<proteinExistence type="inferred from homology"/>
<dbReference type="EMBL" id="AF161596">
    <property type="protein sequence ID" value="AAF80413.1"/>
    <property type="molecule type" value="Genomic_DNA"/>
</dbReference>
<dbReference type="EMBL" id="AF203976">
    <property type="protein sequence ID" value="AAG35184.1"/>
    <property type="molecule type" value="Genomic_DNA"/>
</dbReference>
<dbReference type="EMBL" id="AE006468">
    <property type="protein sequence ID" value="AAL21706.1"/>
    <property type="molecule type" value="Genomic_DNA"/>
</dbReference>
<dbReference type="RefSeq" id="NP_461747.1">
    <property type="nucleotide sequence ID" value="NC_003197.2"/>
</dbReference>
<dbReference type="RefSeq" id="WP_000906486.1">
    <property type="nucleotide sequence ID" value="NC_003197.2"/>
</dbReference>
<dbReference type="SMR" id="P69917"/>
<dbReference type="STRING" id="99287.STM2826"/>
<dbReference type="PaxDb" id="99287-STM2826"/>
<dbReference type="GeneID" id="1254349"/>
<dbReference type="GeneID" id="98389839"/>
<dbReference type="KEGG" id="stm:STM2826"/>
<dbReference type="PATRIC" id="fig|99287.12.peg.2980"/>
<dbReference type="HOGENOM" id="CLU_164837_2_1_6"/>
<dbReference type="OMA" id="VYRKEVY"/>
<dbReference type="PhylomeDB" id="P69917"/>
<dbReference type="BioCyc" id="SENT99287:STM2826-MONOMER"/>
<dbReference type="PHI-base" id="PHI:2682"/>
<dbReference type="PRO" id="PR:P69917"/>
<dbReference type="Proteomes" id="UP000001014">
    <property type="component" value="Chromosome"/>
</dbReference>
<dbReference type="GO" id="GO:0005829">
    <property type="term" value="C:cytosol"/>
    <property type="evidence" value="ECO:0000318"/>
    <property type="project" value="GO_Central"/>
</dbReference>
<dbReference type="GO" id="GO:0048027">
    <property type="term" value="F:mRNA 5'-UTR binding"/>
    <property type="evidence" value="ECO:0007669"/>
    <property type="project" value="UniProtKB-UniRule"/>
</dbReference>
<dbReference type="GO" id="GO:0006402">
    <property type="term" value="P:mRNA catabolic process"/>
    <property type="evidence" value="ECO:0007669"/>
    <property type="project" value="InterPro"/>
</dbReference>
<dbReference type="GO" id="GO:0045947">
    <property type="term" value="P:negative regulation of translational initiation"/>
    <property type="evidence" value="ECO:0007669"/>
    <property type="project" value="UniProtKB-UniRule"/>
</dbReference>
<dbReference type="GO" id="GO:0045948">
    <property type="term" value="P:positive regulation of translational initiation"/>
    <property type="evidence" value="ECO:0007669"/>
    <property type="project" value="UniProtKB-UniRule"/>
</dbReference>
<dbReference type="GO" id="GO:0006109">
    <property type="term" value="P:regulation of carbohydrate metabolic process"/>
    <property type="evidence" value="ECO:0007669"/>
    <property type="project" value="UniProtKB-UniRule"/>
</dbReference>
<dbReference type="FunFam" id="2.60.40.4380:FF:000001">
    <property type="entry name" value="Translational regulator CsrA"/>
    <property type="match status" value="1"/>
</dbReference>
<dbReference type="Gene3D" id="2.60.40.4380">
    <property type="entry name" value="Translational regulator CsrA"/>
    <property type="match status" value="1"/>
</dbReference>
<dbReference type="HAMAP" id="MF_00167">
    <property type="entry name" value="CsrA"/>
    <property type="match status" value="1"/>
</dbReference>
<dbReference type="InterPro" id="IPR003751">
    <property type="entry name" value="CsrA"/>
</dbReference>
<dbReference type="InterPro" id="IPR036107">
    <property type="entry name" value="CsrA_sf"/>
</dbReference>
<dbReference type="NCBIfam" id="TIGR00202">
    <property type="entry name" value="csrA"/>
    <property type="match status" value="1"/>
</dbReference>
<dbReference type="NCBIfam" id="NF002469">
    <property type="entry name" value="PRK01712.1"/>
    <property type="match status" value="1"/>
</dbReference>
<dbReference type="PANTHER" id="PTHR34984">
    <property type="entry name" value="CARBON STORAGE REGULATOR"/>
    <property type="match status" value="1"/>
</dbReference>
<dbReference type="PANTHER" id="PTHR34984:SF1">
    <property type="entry name" value="CARBON STORAGE REGULATOR"/>
    <property type="match status" value="1"/>
</dbReference>
<dbReference type="Pfam" id="PF02599">
    <property type="entry name" value="CsrA"/>
    <property type="match status" value="1"/>
</dbReference>
<dbReference type="SUPFAM" id="SSF117130">
    <property type="entry name" value="CsrA-like"/>
    <property type="match status" value="1"/>
</dbReference>
<accession>P69917</accession>
<accession>P31803</accession>
<comment type="function">
    <text evidence="1">A key translational regulator that binds mRNA to regulate translation initiation and/or mRNA stability. Mediates global changes in gene expression, shifting from rapid growth to stress survival by linking envelope stress, the stringent response and the catabolite repression systems. Usually binds in the 5'-UTR; binding at or near the Shine-Dalgarno sequence prevents ribosome-binding, repressing translation, binding elsewhere in the 5'-UTR can activate translation and/or stabilize the mRNA. Its function is antagonized by small RNA(s).</text>
</comment>
<comment type="subunit">
    <text evidence="1">Homodimer; the beta-strands of each monomer intercalate to form a hydrophobic core, while the alpha-helices form wings that extend away from the core.</text>
</comment>
<comment type="subcellular location">
    <subcellularLocation>
        <location evidence="1">Cytoplasm</location>
    </subcellularLocation>
</comment>
<comment type="disruption phenotype">
    <text evidence="2">Decreases expression of genes encoding virulence proteins (PubMed:19229334). Decreases virulence in mouse (PubMed:19229334).</text>
</comment>
<comment type="similarity">
    <text evidence="1">Belongs to the CsrA/RsmA family.</text>
</comment>
<evidence type="ECO:0000255" key="1">
    <source>
        <dbReference type="HAMAP-Rule" id="MF_00167"/>
    </source>
</evidence>
<evidence type="ECO:0000269" key="2">
    <source>
    </source>
</evidence>
<evidence type="ECO:0000303" key="3">
    <source>
    </source>
</evidence>
<sequence length="61" mass="6856">MLILTRRVGETLMIGDEVTVTVLGVKGNQVRIGVNAPKEVSVHREEIYQRIQAEKSQQSSY</sequence>
<gene>
    <name evidence="1" type="primary">csrA</name>
    <name type="synonym">zfiA</name>
    <name type="ordered locus">STM2826</name>
</gene>
<name>CSRA_SALTY</name>
<organism>
    <name type="scientific">Salmonella typhimurium (strain LT2 / SGSC1412 / ATCC 700720)</name>
    <dbReference type="NCBI Taxonomy" id="99287"/>
    <lineage>
        <taxon>Bacteria</taxon>
        <taxon>Pseudomonadati</taxon>
        <taxon>Pseudomonadota</taxon>
        <taxon>Gammaproteobacteria</taxon>
        <taxon>Enterobacterales</taxon>
        <taxon>Enterobacteriaceae</taxon>
        <taxon>Salmonella</taxon>
    </lineage>
</organism>
<protein>
    <recommendedName>
        <fullName evidence="1">Translational regulator CsrA</fullName>
    </recommendedName>
    <alternativeName>
        <fullName evidence="1">Carbon storage regulator</fullName>
    </alternativeName>
</protein>
<feature type="chain" id="PRO_0000177088" description="Translational regulator CsrA">
    <location>
        <begin position="1"/>
        <end position="61"/>
    </location>
</feature>